<gene>
    <name evidence="5" type="ORF">D3Y57_19160</name>
</gene>
<keyword id="KW-0378">Hydrolase</keyword>
<keyword id="KW-1185">Reference proteome</keyword>
<protein>
    <recommendedName>
        <fullName evidence="3">Anti-CBASS protein Acb1</fullName>
        <shortName evidence="3">Acb1</shortName>
    </recommendedName>
</protein>
<evidence type="ECO:0000250" key="1">
    <source>
        <dbReference type="UniProtKB" id="A0A868BQY3"/>
    </source>
</evidence>
<evidence type="ECO:0000269" key="2">
    <source>
    </source>
</evidence>
<evidence type="ECO:0000303" key="3">
    <source>
    </source>
</evidence>
<evidence type="ECO:0000305" key="4"/>
<evidence type="ECO:0000312" key="5">
    <source>
        <dbReference type="EMBL" id="AYJ87654.1"/>
    </source>
</evidence>
<evidence type="ECO:0000312" key="6">
    <source>
        <dbReference type="Proteomes" id="UP000276254"/>
    </source>
</evidence>
<reference key="1">
    <citation type="submission" date="2018-09" db="EMBL/GenBank/DDBJ databases">
        <title>Sphingomonas peninsula sp. nov., isolated from fildes peninsula, Antarctic soil.</title>
        <authorList>
            <person name="Yingchao G."/>
        </authorList>
    </citation>
    <scope>NUCLEOTIDE SEQUENCE [LARGE SCALE GENOMIC DNA]</scope>
    <source>
        <strain evidence="5 6">LMG 31027 / YZ-8</strain>
    </source>
</reference>
<reference key="2">
    <citation type="journal article" date="2022" name="Nature">
        <title>Phage anti-CBASS and anti-Pycsar nucleases subvert bacterial immunity.</title>
        <authorList>
            <person name="Hobbs S.J."/>
            <person name="Wein T."/>
            <person name="Lu A."/>
            <person name="Morehouse B.R."/>
            <person name="Schnabel J."/>
            <person name="Leavitt A."/>
            <person name="Yirmiya E."/>
            <person name="Sorek R."/>
            <person name="Kranzusch P.J."/>
        </authorList>
    </citation>
    <scope>FUNCTION</scope>
    <scope>CATALYTIC ACTIVITY</scope>
    <source>
        <strain>LMG 31027 / YZ-8</strain>
    </source>
</reference>
<accession>A0A494TJG7</accession>
<dbReference type="EMBL" id="CP032829">
    <property type="protein sequence ID" value="AYJ87654.1"/>
    <property type="molecule type" value="Genomic_DNA"/>
</dbReference>
<dbReference type="RefSeq" id="WP_121155248.1">
    <property type="nucleotide sequence ID" value="NZ_CP032829.1"/>
</dbReference>
<dbReference type="SMR" id="A0A494TJG7"/>
<dbReference type="KEGG" id="spha:D3Y57_19160"/>
<dbReference type="OrthoDB" id="7491028at2"/>
<dbReference type="Proteomes" id="UP000276254">
    <property type="component" value="Chromosome"/>
</dbReference>
<dbReference type="GO" id="GO:0016787">
    <property type="term" value="F:hydrolase activity"/>
    <property type="evidence" value="ECO:0007669"/>
    <property type="project" value="UniProtKB-KW"/>
</dbReference>
<dbReference type="InterPro" id="IPR056175">
    <property type="entry name" value="Acb1-like_C"/>
</dbReference>
<dbReference type="InterPro" id="IPR024459">
    <property type="entry name" value="Acb1-like_N"/>
</dbReference>
<dbReference type="InterPro" id="IPR006445">
    <property type="entry name" value="Phage-assoc_HI1409"/>
</dbReference>
<dbReference type="NCBIfam" id="TIGR01555">
    <property type="entry name" value="phge_rel_HI1409"/>
    <property type="match status" value="1"/>
</dbReference>
<dbReference type="Pfam" id="PF23474">
    <property type="entry name" value="Acb1"/>
    <property type="match status" value="1"/>
</dbReference>
<dbReference type="Pfam" id="PF06381">
    <property type="entry name" value="Phage_portal_3"/>
    <property type="match status" value="1"/>
</dbReference>
<proteinExistence type="evidence at protein level"/>
<organism>
    <name type="scientific">Sphingomonas paeninsulae</name>
    <dbReference type="NCBI Taxonomy" id="2319844"/>
    <lineage>
        <taxon>Bacteria</taxon>
        <taxon>Pseudomonadati</taxon>
        <taxon>Pseudomonadota</taxon>
        <taxon>Alphaproteobacteria</taxon>
        <taxon>Sphingomonadales</taxon>
        <taxon>Sphingomonadaceae</taxon>
        <taxon>Sphingomonas</taxon>
    </lineage>
</organism>
<comment type="function">
    <text evidence="2">Counteracts or regulates the endogenous CBASS antiviral defense system. Phosphodiesterase that enables metal-independent hydrolysis of the host cyclic di- and trinucleotide CBASS signals such as 3'3'-cGAMP, 3'3'cUA, and 3'3'3'-cAAA.</text>
</comment>
<comment type="catalytic activity">
    <reaction evidence="2">
        <text>3',3'-cUAMP + H2O = U[3'-5']pAp[3'] + H(+)</text>
        <dbReference type="Rhea" id="RHEA:72835"/>
        <dbReference type="ChEBI" id="CHEBI:15377"/>
        <dbReference type="ChEBI" id="CHEBI:15378"/>
        <dbReference type="ChEBI" id="CHEBI:143809"/>
        <dbReference type="ChEBI" id="CHEBI:192498"/>
    </reaction>
    <physiologicalReaction direction="left-to-right" evidence="2">
        <dbReference type="Rhea" id="RHEA:72836"/>
    </physiologicalReaction>
</comment>
<comment type="catalytic activity">
    <reaction evidence="2">
        <text>3',3',3'-c-tri-AMP + H2O = A[3'-5']pA[3'-5']pAp[3'] + H(+)</text>
        <dbReference type="Rhea" id="RHEA:72859"/>
        <dbReference type="ChEBI" id="CHEBI:15377"/>
        <dbReference type="ChEBI" id="CHEBI:15378"/>
        <dbReference type="ChEBI" id="CHEBI:192523"/>
        <dbReference type="ChEBI" id="CHEBI:192530"/>
    </reaction>
    <physiologicalReaction direction="left-to-right" evidence="2">
        <dbReference type="Rhea" id="RHEA:72860"/>
    </physiologicalReaction>
</comment>
<comment type="catalytic activity">
    <reaction evidence="2">
        <text>3',3',3'-cAAG + H2O = G[3'-5']pA[3'-5']pAp[3'] + H(+)</text>
        <dbReference type="Rhea" id="RHEA:72863"/>
        <dbReference type="ChEBI" id="CHEBI:15377"/>
        <dbReference type="ChEBI" id="CHEBI:15378"/>
        <dbReference type="ChEBI" id="CHEBI:143810"/>
        <dbReference type="ChEBI" id="CHEBI:192532"/>
    </reaction>
    <physiologicalReaction direction="left-to-right" evidence="2">
        <dbReference type="Rhea" id="RHEA:72864"/>
    </physiologicalReaction>
</comment>
<comment type="catalytic activity">
    <reaction evidence="2">
        <text>3',3',3'-cAAG + H2O = A[3'-5']pG[3'-5']pAp[3'] + H(+)</text>
        <dbReference type="Rhea" id="RHEA:72867"/>
        <dbReference type="ChEBI" id="CHEBI:15377"/>
        <dbReference type="ChEBI" id="CHEBI:15378"/>
        <dbReference type="ChEBI" id="CHEBI:143810"/>
        <dbReference type="ChEBI" id="CHEBI:192533"/>
    </reaction>
    <physiologicalReaction direction="left-to-right" evidence="2">
        <dbReference type="Rhea" id="RHEA:72868"/>
    </physiologicalReaction>
</comment>
<comment type="catalytic activity">
    <reaction evidence="2">
        <text>3',3'-cGAMP + H2O = G[3'-5']pAp[3'] + H(+)</text>
        <dbReference type="Rhea" id="RHEA:72831"/>
        <dbReference type="ChEBI" id="CHEBI:15377"/>
        <dbReference type="ChEBI" id="CHEBI:15378"/>
        <dbReference type="ChEBI" id="CHEBI:71501"/>
        <dbReference type="ChEBI" id="CHEBI:192497"/>
    </reaction>
    <physiologicalReaction direction="left-to-right" evidence="2">
        <dbReference type="Rhea" id="RHEA:72832"/>
    </physiologicalReaction>
</comment>
<comment type="miscellaneous">
    <text evidence="2">This homolog of an antiviral immune evasion nuclease may be due to cryptic prophages, or it may play a role in regulating the endogenous antiviral defense system based on cyclic nucleotides.</text>
</comment>
<comment type="similarity">
    <text evidence="4">Belongs to the anti-CBASS protein Acb1 family.</text>
</comment>
<sequence length="624" mass="68017">MSMVRSFFDGLTNVLSGAGTSVDKRVHARYGLNIVDQHQVEASYRTSWLARKIVDMPAHDMTREWRDWKADGELIGKIEAEEKRLCLRERVTQAIVLGRLGGGAIYLGIKGDDPSQPLAVEHIRPGQLSYIAVFSRWQLTIGQEVSDPEDALFGGPDYFQITSIANKVGVRIHPSRMVIFKGAHVMRGIGSQWEDAFWGDPIYQAVGDAIRNADSAQNSFASLIDEATYDVIGIPGLMERLSQPGGDAQLSKRLDAARQGKSNHRAIILDSGEGGKDAETWVTRQVTWAGMPELMAAFLQTVAGASDIPYTRLLGTSATGMSATGEGDKNDYLSSIATKQETMLRPNMVRIDAVMLRSAGIKDELWFDWSPLFEMGEKERAALDKLKADTAKVWGDSGLVPIDALAKGAQNLLTEDGTYPGLDEELKKAEAIVAPDADVAPVVANPDDLGLTSEAKPKPLLKIVGDAAPRPLYVNRPLLNAAEFIAWAKAQGFKTTTPADDLHVTILYSKTPVDWMKMGTDGWGSDAKGNLDVAPGGARIVEPLGDKGAVVLLFTSSSLSWRHEEMVRNGASHDFDEYQSHVTISYDASDVDLSKVEPYRGVLKFGPEVFTEIVEDWKPTGGEA</sequence>
<name>ACB1_SPHPE</name>
<feature type="chain" id="PRO_0000456701" description="Anti-CBASS protein Acb1">
    <location>
        <begin position="1"/>
        <end position="624"/>
    </location>
</feature>
<feature type="active site" evidence="1">
    <location>
        <position position="503"/>
    </location>
</feature>
<feature type="active site" evidence="1">
    <location>
        <position position="505"/>
    </location>
</feature>
<feature type="active site" evidence="1">
    <location>
        <position position="581"/>
    </location>
</feature>
<feature type="active site" evidence="1">
    <location>
        <position position="583"/>
    </location>
</feature>
<feature type="binding site" evidence="1">
    <location>
        <position position="106"/>
    </location>
    <ligand>
        <name>3',3'-cGAMP</name>
        <dbReference type="ChEBI" id="CHEBI:71501"/>
    </ligand>
</feature>
<feature type="binding site" evidence="1">
    <location>
        <position position="106"/>
    </location>
    <ligand>
        <name>3',3'-cUAMP</name>
        <dbReference type="ChEBI" id="CHEBI:143809"/>
    </ligand>
</feature>
<feature type="binding site" evidence="1">
    <location>
        <position position="617"/>
    </location>
    <ligand>
        <name>3',3'-cGAMP</name>
        <dbReference type="ChEBI" id="CHEBI:71501"/>
    </ligand>
</feature>
<feature type="binding site" evidence="1">
    <location>
        <position position="617"/>
    </location>
    <ligand>
        <name>3',3'-cUAMP</name>
        <dbReference type="ChEBI" id="CHEBI:143809"/>
    </ligand>
</feature>